<proteinExistence type="inferred from homology"/>
<feature type="initiator methionine" description="Removed" evidence="1">
    <location>
        <position position="1"/>
    </location>
</feature>
<feature type="chain" id="PRO_1000094064" description="Formamidopyrimidine-DNA glycosylase">
    <location>
        <begin position="2"/>
        <end position="270"/>
    </location>
</feature>
<feature type="zinc finger region" description="FPG-type" evidence="2">
    <location>
        <begin position="236"/>
        <end position="270"/>
    </location>
</feature>
<feature type="active site" description="Schiff-base intermediate with DNA" evidence="2">
    <location>
        <position position="2"/>
    </location>
</feature>
<feature type="active site" description="Proton donor" evidence="2">
    <location>
        <position position="3"/>
    </location>
</feature>
<feature type="active site" description="Proton donor; for beta-elimination activity" evidence="2">
    <location>
        <position position="58"/>
    </location>
</feature>
<feature type="active site" description="Proton donor; for delta-elimination activity" evidence="2">
    <location>
        <position position="260"/>
    </location>
</feature>
<feature type="binding site" evidence="2">
    <location>
        <position position="91"/>
    </location>
    <ligand>
        <name>DNA</name>
        <dbReference type="ChEBI" id="CHEBI:16991"/>
    </ligand>
</feature>
<feature type="binding site" evidence="2">
    <location>
        <position position="110"/>
    </location>
    <ligand>
        <name>DNA</name>
        <dbReference type="ChEBI" id="CHEBI:16991"/>
    </ligand>
</feature>
<feature type="binding site" evidence="2">
    <location>
        <position position="151"/>
    </location>
    <ligand>
        <name>DNA</name>
        <dbReference type="ChEBI" id="CHEBI:16991"/>
    </ligand>
</feature>
<sequence length="270" mass="30196">MPELPEVETTRRGIAPHLEGQRVSRVVVRDRRLRWPIPEDLDVRLSGQRILSVERRAKYLLINAEVGTLISHLGMSGNLRLVQLGLPAAKHEHVDIELESGLMLRYTDPRRFGAMLWSLDPLNHELLLRLGPEPLTDLFDGERLFQLSRGRTMAVKPFIMDNAVVVGVGNIYATEALFAAGIDPRREAGGISRTRYLKLAIEIKRVLAAAIEQGGTTLRDFIGGDGQPGYFQQELFVYGRGGMPCKLCGTTLREAKLGQRASVYCPRCQR</sequence>
<gene>
    <name evidence="2" type="primary">mutM</name>
    <name evidence="2" type="synonym">fpg</name>
    <name type="ordered locus">PputW619_0340</name>
</gene>
<reference key="1">
    <citation type="submission" date="2008-02" db="EMBL/GenBank/DDBJ databases">
        <title>Complete sequence of Pseudomonas putida W619.</title>
        <authorList>
            <person name="Copeland A."/>
            <person name="Lucas S."/>
            <person name="Lapidus A."/>
            <person name="Barry K."/>
            <person name="Detter J.C."/>
            <person name="Glavina del Rio T."/>
            <person name="Dalin E."/>
            <person name="Tice H."/>
            <person name="Pitluck S."/>
            <person name="Chain P."/>
            <person name="Malfatti S."/>
            <person name="Shin M."/>
            <person name="Vergez L."/>
            <person name="Schmutz J."/>
            <person name="Larimer F."/>
            <person name="Land M."/>
            <person name="Hauser L."/>
            <person name="Kyrpides N."/>
            <person name="Kim E."/>
            <person name="Taghavi S."/>
            <person name="Vangronsveld D."/>
            <person name="van der Lelie D."/>
            <person name="Richardson P."/>
        </authorList>
    </citation>
    <scope>NUCLEOTIDE SEQUENCE [LARGE SCALE GENOMIC DNA]</scope>
    <source>
        <strain>W619</strain>
    </source>
</reference>
<accession>B1J2M4</accession>
<organism>
    <name type="scientific">Pseudomonas putida (strain W619)</name>
    <dbReference type="NCBI Taxonomy" id="390235"/>
    <lineage>
        <taxon>Bacteria</taxon>
        <taxon>Pseudomonadati</taxon>
        <taxon>Pseudomonadota</taxon>
        <taxon>Gammaproteobacteria</taxon>
        <taxon>Pseudomonadales</taxon>
        <taxon>Pseudomonadaceae</taxon>
        <taxon>Pseudomonas</taxon>
    </lineage>
</organism>
<evidence type="ECO:0000250" key="1"/>
<evidence type="ECO:0000255" key="2">
    <source>
        <dbReference type="HAMAP-Rule" id="MF_00103"/>
    </source>
</evidence>
<name>FPG_PSEPW</name>
<protein>
    <recommendedName>
        <fullName evidence="2">Formamidopyrimidine-DNA glycosylase</fullName>
        <shortName evidence="2">Fapy-DNA glycosylase</shortName>
        <ecNumber evidence="2">3.2.2.23</ecNumber>
    </recommendedName>
    <alternativeName>
        <fullName evidence="2">DNA-(apurinic or apyrimidinic site) lyase MutM</fullName>
        <shortName evidence="2">AP lyase MutM</shortName>
        <ecNumber evidence="2">4.2.99.18</ecNumber>
    </alternativeName>
</protein>
<dbReference type="EC" id="3.2.2.23" evidence="2"/>
<dbReference type="EC" id="4.2.99.18" evidence="2"/>
<dbReference type="EMBL" id="CP000949">
    <property type="protein sequence ID" value="ACA70846.1"/>
    <property type="molecule type" value="Genomic_DNA"/>
</dbReference>
<dbReference type="SMR" id="B1J2M4"/>
<dbReference type="STRING" id="390235.PputW619_0340"/>
<dbReference type="KEGG" id="ppw:PputW619_0340"/>
<dbReference type="eggNOG" id="COG0266">
    <property type="taxonomic scope" value="Bacteria"/>
</dbReference>
<dbReference type="HOGENOM" id="CLU_038423_1_1_6"/>
<dbReference type="OrthoDB" id="9800855at2"/>
<dbReference type="GO" id="GO:0034039">
    <property type="term" value="F:8-oxo-7,8-dihydroguanine DNA N-glycosylase activity"/>
    <property type="evidence" value="ECO:0007669"/>
    <property type="project" value="TreeGrafter"/>
</dbReference>
<dbReference type="GO" id="GO:0140078">
    <property type="term" value="F:class I DNA-(apurinic or apyrimidinic site) endonuclease activity"/>
    <property type="evidence" value="ECO:0007669"/>
    <property type="project" value="UniProtKB-EC"/>
</dbReference>
<dbReference type="GO" id="GO:0003684">
    <property type="term" value="F:damaged DNA binding"/>
    <property type="evidence" value="ECO:0007669"/>
    <property type="project" value="InterPro"/>
</dbReference>
<dbReference type="GO" id="GO:0008270">
    <property type="term" value="F:zinc ion binding"/>
    <property type="evidence" value="ECO:0007669"/>
    <property type="project" value="UniProtKB-UniRule"/>
</dbReference>
<dbReference type="GO" id="GO:0006284">
    <property type="term" value="P:base-excision repair"/>
    <property type="evidence" value="ECO:0007669"/>
    <property type="project" value="InterPro"/>
</dbReference>
<dbReference type="CDD" id="cd08966">
    <property type="entry name" value="EcFpg-like_N"/>
    <property type="match status" value="1"/>
</dbReference>
<dbReference type="FunFam" id="1.10.8.50:FF:000003">
    <property type="entry name" value="Formamidopyrimidine-DNA glycosylase"/>
    <property type="match status" value="1"/>
</dbReference>
<dbReference type="FunFam" id="3.20.190.10:FF:000001">
    <property type="entry name" value="Formamidopyrimidine-DNA glycosylase"/>
    <property type="match status" value="1"/>
</dbReference>
<dbReference type="Gene3D" id="1.10.8.50">
    <property type="match status" value="1"/>
</dbReference>
<dbReference type="Gene3D" id="3.20.190.10">
    <property type="entry name" value="MutM-like, N-terminal"/>
    <property type="match status" value="1"/>
</dbReference>
<dbReference type="HAMAP" id="MF_00103">
    <property type="entry name" value="Fapy_DNA_glycosyl"/>
    <property type="match status" value="1"/>
</dbReference>
<dbReference type="InterPro" id="IPR015886">
    <property type="entry name" value="DNA_glyclase/AP_lyase_DNA-bd"/>
</dbReference>
<dbReference type="InterPro" id="IPR015887">
    <property type="entry name" value="DNA_glyclase_Znf_dom_DNA_BS"/>
</dbReference>
<dbReference type="InterPro" id="IPR020629">
    <property type="entry name" value="Formamido-pyr_DNA_Glyclase"/>
</dbReference>
<dbReference type="InterPro" id="IPR012319">
    <property type="entry name" value="FPG_cat"/>
</dbReference>
<dbReference type="InterPro" id="IPR035937">
    <property type="entry name" value="MutM-like_N-ter"/>
</dbReference>
<dbReference type="InterPro" id="IPR010979">
    <property type="entry name" value="Ribosomal_uS13-like_H2TH"/>
</dbReference>
<dbReference type="InterPro" id="IPR000214">
    <property type="entry name" value="Znf_DNA_glyclase/AP_lyase"/>
</dbReference>
<dbReference type="InterPro" id="IPR010663">
    <property type="entry name" value="Znf_FPG/IleRS"/>
</dbReference>
<dbReference type="NCBIfam" id="TIGR00577">
    <property type="entry name" value="fpg"/>
    <property type="match status" value="1"/>
</dbReference>
<dbReference type="NCBIfam" id="NF002211">
    <property type="entry name" value="PRK01103.1"/>
    <property type="match status" value="1"/>
</dbReference>
<dbReference type="PANTHER" id="PTHR22993">
    <property type="entry name" value="FORMAMIDOPYRIMIDINE-DNA GLYCOSYLASE"/>
    <property type="match status" value="1"/>
</dbReference>
<dbReference type="PANTHER" id="PTHR22993:SF9">
    <property type="entry name" value="FORMAMIDOPYRIMIDINE-DNA GLYCOSYLASE"/>
    <property type="match status" value="1"/>
</dbReference>
<dbReference type="Pfam" id="PF01149">
    <property type="entry name" value="Fapy_DNA_glyco"/>
    <property type="match status" value="1"/>
</dbReference>
<dbReference type="Pfam" id="PF06831">
    <property type="entry name" value="H2TH"/>
    <property type="match status" value="1"/>
</dbReference>
<dbReference type="Pfam" id="PF06827">
    <property type="entry name" value="zf-FPG_IleRS"/>
    <property type="match status" value="1"/>
</dbReference>
<dbReference type="SMART" id="SM00898">
    <property type="entry name" value="Fapy_DNA_glyco"/>
    <property type="match status" value="1"/>
</dbReference>
<dbReference type="SMART" id="SM01232">
    <property type="entry name" value="H2TH"/>
    <property type="match status" value="1"/>
</dbReference>
<dbReference type="SUPFAM" id="SSF57716">
    <property type="entry name" value="Glucocorticoid receptor-like (DNA-binding domain)"/>
    <property type="match status" value="1"/>
</dbReference>
<dbReference type="SUPFAM" id="SSF81624">
    <property type="entry name" value="N-terminal domain of MutM-like DNA repair proteins"/>
    <property type="match status" value="1"/>
</dbReference>
<dbReference type="SUPFAM" id="SSF46946">
    <property type="entry name" value="S13-like H2TH domain"/>
    <property type="match status" value="1"/>
</dbReference>
<dbReference type="PROSITE" id="PS51068">
    <property type="entry name" value="FPG_CAT"/>
    <property type="match status" value="1"/>
</dbReference>
<dbReference type="PROSITE" id="PS01242">
    <property type="entry name" value="ZF_FPG_1"/>
    <property type="match status" value="1"/>
</dbReference>
<dbReference type="PROSITE" id="PS51066">
    <property type="entry name" value="ZF_FPG_2"/>
    <property type="match status" value="1"/>
</dbReference>
<keyword id="KW-0227">DNA damage</keyword>
<keyword id="KW-0234">DNA repair</keyword>
<keyword id="KW-0238">DNA-binding</keyword>
<keyword id="KW-0326">Glycosidase</keyword>
<keyword id="KW-0378">Hydrolase</keyword>
<keyword id="KW-0456">Lyase</keyword>
<keyword id="KW-0479">Metal-binding</keyword>
<keyword id="KW-0511">Multifunctional enzyme</keyword>
<keyword id="KW-0862">Zinc</keyword>
<keyword id="KW-0863">Zinc-finger</keyword>
<comment type="function">
    <text evidence="2">Involved in base excision repair of DNA damaged by oxidation or by mutagenic agents. Acts as a DNA glycosylase that recognizes and removes damaged bases. Has a preference for oxidized purines, such as 7,8-dihydro-8-oxoguanine (8-oxoG). Has AP (apurinic/apyrimidinic) lyase activity and introduces nicks in the DNA strand. Cleaves the DNA backbone by beta-delta elimination to generate a single-strand break at the site of the removed base with both 3'- and 5'-phosphates.</text>
</comment>
<comment type="catalytic activity">
    <reaction evidence="2">
        <text>Hydrolysis of DNA containing ring-opened 7-methylguanine residues, releasing 2,6-diamino-4-hydroxy-5-(N-methyl)formamidopyrimidine.</text>
        <dbReference type="EC" id="3.2.2.23"/>
    </reaction>
</comment>
<comment type="catalytic activity">
    <reaction evidence="2">
        <text>2'-deoxyribonucleotide-(2'-deoxyribose 5'-phosphate)-2'-deoxyribonucleotide-DNA = a 3'-end 2'-deoxyribonucleotide-(2,3-dehydro-2,3-deoxyribose 5'-phosphate)-DNA + a 5'-end 5'-phospho-2'-deoxyribonucleoside-DNA + H(+)</text>
        <dbReference type="Rhea" id="RHEA:66592"/>
        <dbReference type="Rhea" id="RHEA-COMP:13180"/>
        <dbReference type="Rhea" id="RHEA-COMP:16897"/>
        <dbReference type="Rhea" id="RHEA-COMP:17067"/>
        <dbReference type="ChEBI" id="CHEBI:15378"/>
        <dbReference type="ChEBI" id="CHEBI:136412"/>
        <dbReference type="ChEBI" id="CHEBI:157695"/>
        <dbReference type="ChEBI" id="CHEBI:167181"/>
        <dbReference type="EC" id="4.2.99.18"/>
    </reaction>
</comment>
<comment type="cofactor">
    <cofactor evidence="2">
        <name>Zn(2+)</name>
        <dbReference type="ChEBI" id="CHEBI:29105"/>
    </cofactor>
    <text evidence="2">Binds 1 zinc ion per subunit.</text>
</comment>
<comment type="subunit">
    <text evidence="2">Monomer.</text>
</comment>
<comment type="similarity">
    <text evidence="2">Belongs to the FPG family.</text>
</comment>